<comment type="function">
    <text>ATP-dependent RNA helicase involved in 40S ribosomal subunit biogenesis. Required for the processing and cleavage of 35S pre-rRNA at sites A0, A1, and A2, leading to mature 18S rRNA.</text>
</comment>
<comment type="catalytic activity">
    <reaction>
        <text>ATP + H2O = ADP + phosphate + H(+)</text>
        <dbReference type="Rhea" id="RHEA:13065"/>
        <dbReference type="ChEBI" id="CHEBI:15377"/>
        <dbReference type="ChEBI" id="CHEBI:15378"/>
        <dbReference type="ChEBI" id="CHEBI:30616"/>
        <dbReference type="ChEBI" id="CHEBI:43474"/>
        <dbReference type="ChEBI" id="CHEBI:456216"/>
        <dbReference type="EC" id="3.6.4.13"/>
    </reaction>
</comment>
<comment type="subunit">
    <text evidence="1">Interacts with the U3 snoRNA and is associated with the 90S and 40S pre-ribosomes.</text>
</comment>
<comment type="subcellular location">
    <subcellularLocation>
        <location evidence="1">Nucleus</location>
        <location evidence="1">Nucleolus</location>
    </subcellularLocation>
</comment>
<comment type="domain">
    <text>The Q motif is unique to and characteristic of the DEAD box family of RNA helicases and controls ATP binding and hydrolysis.</text>
</comment>
<comment type="similarity">
    <text evidence="5">Belongs to the DEAD box helicase family. DDX52/ROK1 subfamily.</text>
</comment>
<comment type="sequence caution" evidence="5">
    <conflict type="erroneous initiation">
        <sequence resource="EMBL-CDS" id="EDK39127"/>
    </conflict>
</comment>
<reference key="1">
    <citation type="journal article" date="2009" name="Nature">
        <title>Evolution of pathogenicity and sexual reproduction in eight Candida genomes.</title>
        <authorList>
            <person name="Butler G."/>
            <person name="Rasmussen M.D."/>
            <person name="Lin M.F."/>
            <person name="Santos M.A.S."/>
            <person name="Sakthikumar S."/>
            <person name="Munro C.A."/>
            <person name="Rheinbay E."/>
            <person name="Grabherr M."/>
            <person name="Forche A."/>
            <person name="Reedy J.L."/>
            <person name="Agrafioti I."/>
            <person name="Arnaud M.B."/>
            <person name="Bates S."/>
            <person name="Brown A.J.P."/>
            <person name="Brunke S."/>
            <person name="Costanzo M.C."/>
            <person name="Fitzpatrick D.A."/>
            <person name="de Groot P.W.J."/>
            <person name="Harris D."/>
            <person name="Hoyer L.L."/>
            <person name="Hube B."/>
            <person name="Klis F.M."/>
            <person name="Kodira C."/>
            <person name="Lennard N."/>
            <person name="Logue M.E."/>
            <person name="Martin R."/>
            <person name="Neiman A.M."/>
            <person name="Nikolaou E."/>
            <person name="Quail M.A."/>
            <person name="Quinn J."/>
            <person name="Santos M.C."/>
            <person name="Schmitzberger F.F."/>
            <person name="Sherlock G."/>
            <person name="Shah P."/>
            <person name="Silverstein K.A.T."/>
            <person name="Skrzypek M.S."/>
            <person name="Soll D."/>
            <person name="Staggs R."/>
            <person name="Stansfield I."/>
            <person name="Stumpf M.P.H."/>
            <person name="Sudbery P.E."/>
            <person name="Srikantha T."/>
            <person name="Zeng Q."/>
            <person name="Berman J."/>
            <person name="Berriman M."/>
            <person name="Heitman J."/>
            <person name="Gow N.A.R."/>
            <person name="Lorenz M.C."/>
            <person name="Birren B.W."/>
            <person name="Kellis M."/>
            <person name="Cuomo C.A."/>
        </authorList>
    </citation>
    <scope>NUCLEOTIDE SEQUENCE [LARGE SCALE GENOMIC DNA]</scope>
    <source>
        <strain>ATCC 6260 / CBS 566 / DSM 6381 / JCM 1539 / NBRC 10279 / NRRL Y-324</strain>
    </source>
</reference>
<organism>
    <name type="scientific">Meyerozyma guilliermondii (strain ATCC 6260 / CBS 566 / DSM 6381 / JCM 1539 / NBRC 10279 / NRRL Y-324)</name>
    <name type="common">Yeast</name>
    <name type="synonym">Candida guilliermondii</name>
    <dbReference type="NCBI Taxonomy" id="294746"/>
    <lineage>
        <taxon>Eukaryota</taxon>
        <taxon>Fungi</taxon>
        <taxon>Dikarya</taxon>
        <taxon>Ascomycota</taxon>
        <taxon>Saccharomycotina</taxon>
        <taxon>Pichiomycetes</taxon>
        <taxon>Debaryomycetaceae</taxon>
        <taxon>Meyerozyma</taxon>
    </lineage>
</organism>
<sequence length="537" mass="60013">MDIFRILSRGAALKRSSNSDPGVKSESQNATKDKQNSLLRQVEKETDFFNTRKHTEVTKDIEDEAQDEAVPPPKITTEEDAAKLRKQNKVNVSGTDIPLPIGSFEDLIARCNLNRKLLANLIASGYSEPTAIQCEAIPASAEGRDLIACAPTGSGKTLAYLIPMAQALISSPKTKNYGIRGVVIAPTNELAIQIYQTLAPMCRGSNLNVTLLSKQVASKISSSIISANKFDVLICTPLRLIDLVKKEQVDLSKVEHLVIDEADKLFDHGFVEQTDEILSHCTLPTRRTSMFSATIPSGVEEMANSIMKDQIRIIVGHKEGASTSIDQKLVFTGNEEGKLLAIRQMVQQGEFKPPIIIFLQSIPRAKALFHELIYDKLNVEVIHAERTPKQREEAIRRFKNGDAWVLITTDVLARGVDFKGVNLVINYDVPQTSQAYVHRIGRTGRGGKEGKAVTFFTKEDKLAIKPVLNVMKQSGCHEGYSEWMESMEKLTKKEKQQIKQHEIKRKKISTVPQVVSKKRKQRKEMIEASKRRKEETK</sequence>
<accession>A5DIX5</accession>
<evidence type="ECO:0000250" key="1"/>
<evidence type="ECO:0000255" key="2">
    <source>
        <dbReference type="PROSITE-ProRule" id="PRU00541"/>
    </source>
</evidence>
<evidence type="ECO:0000255" key="3">
    <source>
        <dbReference type="PROSITE-ProRule" id="PRU00542"/>
    </source>
</evidence>
<evidence type="ECO:0000256" key="4">
    <source>
        <dbReference type="SAM" id="MobiDB-lite"/>
    </source>
</evidence>
<evidence type="ECO:0000305" key="5"/>
<keyword id="KW-0067">ATP-binding</keyword>
<keyword id="KW-0347">Helicase</keyword>
<keyword id="KW-0378">Hydrolase</keyword>
<keyword id="KW-0547">Nucleotide-binding</keyword>
<keyword id="KW-0539">Nucleus</keyword>
<keyword id="KW-1185">Reference proteome</keyword>
<keyword id="KW-0690">Ribosome biogenesis</keyword>
<keyword id="KW-0694">RNA-binding</keyword>
<keyword id="KW-0698">rRNA processing</keyword>
<dbReference type="EC" id="3.6.4.13"/>
<dbReference type="EMBL" id="CH408157">
    <property type="protein sequence ID" value="EDK39127.2"/>
    <property type="status" value="ALT_INIT"/>
    <property type="molecule type" value="Genomic_DNA"/>
</dbReference>
<dbReference type="RefSeq" id="XP_001485496.1">
    <property type="nucleotide sequence ID" value="XM_001485446.1"/>
</dbReference>
<dbReference type="SMR" id="A5DIX5"/>
<dbReference type="FunCoup" id="A5DIX5">
    <property type="interactions" value="1041"/>
</dbReference>
<dbReference type="STRING" id="294746.A5DIX5"/>
<dbReference type="GeneID" id="5127300"/>
<dbReference type="KEGG" id="pgu:PGUG_03226"/>
<dbReference type="eggNOG" id="KOG0344">
    <property type="taxonomic scope" value="Eukaryota"/>
</dbReference>
<dbReference type="HOGENOM" id="CLU_003041_1_4_1"/>
<dbReference type="InParanoid" id="A5DIX5"/>
<dbReference type="OrthoDB" id="360161at2759"/>
<dbReference type="Proteomes" id="UP000001997">
    <property type="component" value="Unassembled WGS sequence"/>
</dbReference>
<dbReference type="GO" id="GO:0005829">
    <property type="term" value="C:cytosol"/>
    <property type="evidence" value="ECO:0007669"/>
    <property type="project" value="TreeGrafter"/>
</dbReference>
<dbReference type="GO" id="GO:0005730">
    <property type="term" value="C:nucleolus"/>
    <property type="evidence" value="ECO:0007669"/>
    <property type="project" value="UniProtKB-SubCell"/>
</dbReference>
<dbReference type="GO" id="GO:0005524">
    <property type="term" value="F:ATP binding"/>
    <property type="evidence" value="ECO:0007669"/>
    <property type="project" value="UniProtKB-KW"/>
</dbReference>
<dbReference type="GO" id="GO:0016887">
    <property type="term" value="F:ATP hydrolysis activity"/>
    <property type="evidence" value="ECO:0007669"/>
    <property type="project" value="RHEA"/>
</dbReference>
<dbReference type="GO" id="GO:0003723">
    <property type="term" value="F:RNA binding"/>
    <property type="evidence" value="ECO:0007669"/>
    <property type="project" value="UniProtKB-KW"/>
</dbReference>
<dbReference type="GO" id="GO:0003724">
    <property type="term" value="F:RNA helicase activity"/>
    <property type="evidence" value="ECO:0007669"/>
    <property type="project" value="UniProtKB-EC"/>
</dbReference>
<dbReference type="GO" id="GO:0030490">
    <property type="term" value="P:maturation of SSU-rRNA"/>
    <property type="evidence" value="ECO:0007669"/>
    <property type="project" value="InterPro"/>
</dbReference>
<dbReference type="CDD" id="cd17957">
    <property type="entry name" value="DEADc_DDX52"/>
    <property type="match status" value="1"/>
</dbReference>
<dbReference type="CDD" id="cd18787">
    <property type="entry name" value="SF2_C_DEAD"/>
    <property type="match status" value="1"/>
</dbReference>
<dbReference type="Gene3D" id="3.40.50.300">
    <property type="entry name" value="P-loop containing nucleotide triphosphate hydrolases"/>
    <property type="match status" value="2"/>
</dbReference>
<dbReference type="InterPro" id="IPR044764">
    <property type="entry name" value="DDX52/Rok1_DEADc"/>
</dbReference>
<dbReference type="InterPro" id="IPR011545">
    <property type="entry name" value="DEAD/DEAH_box_helicase_dom"/>
</dbReference>
<dbReference type="InterPro" id="IPR050079">
    <property type="entry name" value="DEAD_box_RNA_helicase"/>
</dbReference>
<dbReference type="InterPro" id="IPR014001">
    <property type="entry name" value="Helicase_ATP-bd"/>
</dbReference>
<dbReference type="InterPro" id="IPR001650">
    <property type="entry name" value="Helicase_C-like"/>
</dbReference>
<dbReference type="InterPro" id="IPR027417">
    <property type="entry name" value="P-loop_NTPase"/>
</dbReference>
<dbReference type="InterPro" id="IPR000629">
    <property type="entry name" value="RNA-helicase_DEAD-box_CS"/>
</dbReference>
<dbReference type="PANTHER" id="PTHR47959">
    <property type="entry name" value="ATP-DEPENDENT RNA HELICASE RHLE-RELATED"/>
    <property type="match status" value="1"/>
</dbReference>
<dbReference type="PANTHER" id="PTHR47959:SF15">
    <property type="entry name" value="RNA HELICASE"/>
    <property type="match status" value="1"/>
</dbReference>
<dbReference type="Pfam" id="PF00270">
    <property type="entry name" value="DEAD"/>
    <property type="match status" value="1"/>
</dbReference>
<dbReference type="Pfam" id="PF00271">
    <property type="entry name" value="Helicase_C"/>
    <property type="match status" value="1"/>
</dbReference>
<dbReference type="SMART" id="SM00487">
    <property type="entry name" value="DEXDc"/>
    <property type="match status" value="1"/>
</dbReference>
<dbReference type="SMART" id="SM00490">
    <property type="entry name" value="HELICc"/>
    <property type="match status" value="1"/>
</dbReference>
<dbReference type="SUPFAM" id="SSF52540">
    <property type="entry name" value="P-loop containing nucleoside triphosphate hydrolases"/>
    <property type="match status" value="1"/>
</dbReference>
<dbReference type="PROSITE" id="PS00039">
    <property type="entry name" value="DEAD_ATP_HELICASE"/>
    <property type="match status" value="1"/>
</dbReference>
<dbReference type="PROSITE" id="PS51192">
    <property type="entry name" value="HELICASE_ATP_BIND_1"/>
    <property type="match status" value="1"/>
</dbReference>
<dbReference type="PROSITE" id="PS51194">
    <property type="entry name" value="HELICASE_CTER"/>
    <property type="match status" value="1"/>
</dbReference>
<dbReference type="PROSITE" id="PS51195">
    <property type="entry name" value="Q_MOTIF"/>
    <property type="match status" value="1"/>
</dbReference>
<gene>
    <name type="primary">ROK1</name>
    <name type="ORF">PGUG_03226</name>
</gene>
<feature type="chain" id="PRO_0000294664" description="ATP-dependent RNA helicase ROK1">
    <location>
        <begin position="1"/>
        <end position="537"/>
    </location>
</feature>
<feature type="domain" description="Helicase ATP-binding" evidence="2">
    <location>
        <begin position="137"/>
        <end position="313"/>
    </location>
</feature>
<feature type="domain" description="Helicase C-terminal" evidence="3">
    <location>
        <begin position="324"/>
        <end position="488"/>
    </location>
</feature>
<feature type="region of interest" description="Disordered" evidence="4">
    <location>
        <begin position="14"/>
        <end position="51"/>
    </location>
</feature>
<feature type="region of interest" description="Disordered" evidence="4">
    <location>
        <begin position="512"/>
        <end position="537"/>
    </location>
</feature>
<feature type="short sequence motif" description="Q motif">
    <location>
        <begin position="106"/>
        <end position="134"/>
    </location>
</feature>
<feature type="short sequence motif" description="DEAD box">
    <location>
        <begin position="260"/>
        <end position="263"/>
    </location>
</feature>
<feature type="compositionally biased region" description="Polar residues" evidence="4">
    <location>
        <begin position="15"/>
        <end position="30"/>
    </location>
</feature>
<feature type="compositionally biased region" description="Basic and acidic residues" evidence="4">
    <location>
        <begin position="31"/>
        <end position="47"/>
    </location>
</feature>
<feature type="compositionally biased region" description="Basic and acidic residues" evidence="4">
    <location>
        <begin position="523"/>
        <end position="537"/>
    </location>
</feature>
<feature type="binding site" evidence="2">
    <location>
        <begin position="150"/>
        <end position="157"/>
    </location>
    <ligand>
        <name>ATP</name>
        <dbReference type="ChEBI" id="CHEBI:30616"/>
    </ligand>
</feature>
<protein>
    <recommendedName>
        <fullName>ATP-dependent RNA helicase ROK1</fullName>
        <ecNumber>3.6.4.13</ecNumber>
    </recommendedName>
</protein>
<proteinExistence type="inferred from homology"/>
<name>ROK1_PICGU</name>